<reference key="1">
    <citation type="journal article" date="2009" name="Proc. Natl. Acad. Sci. U.S.A.">
        <title>Biogeography of the Sulfolobus islandicus pan-genome.</title>
        <authorList>
            <person name="Reno M.L."/>
            <person name="Held N.L."/>
            <person name="Fields C.J."/>
            <person name="Burke P.V."/>
            <person name="Whitaker R.J."/>
        </authorList>
    </citation>
    <scope>NUCLEOTIDE SEQUENCE [LARGE SCALE GENOMIC DNA]</scope>
    <source>
        <strain>M.16.4 / Kamchatka #3</strain>
    </source>
</reference>
<accession>C4KKA3</accession>
<sequence length="267" mass="29502">MKKVTIRDFIKKKSTKEKITILTAYDYPTAKIISNTGLDSILVGDSLGMVVLGYANTLNVTMRDMISHTRAVARANPPQLIVADMPFLSYEIDTKSAVKNAGLLVKAGSDAIKLEGGEEMKDTVKAIVKAGIPVMGHIGLTPQRFLRLGGFRTIGKTKQEEDQLIKDSLELEDAGVFSLVIENTYVDIAKRITEKLNIPTICIGAGPYCDGQVLVINDLLGLSEFTPYFAKSYVNLKEIISNAINQYIIDVKNNKFPEKQHYKEKES</sequence>
<evidence type="ECO:0000255" key="1">
    <source>
        <dbReference type="HAMAP-Rule" id="MF_00156"/>
    </source>
</evidence>
<dbReference type="EC" id="2.1.2.11" evidence="1"/>
<dbReference type="EMBL" id="CP001402">
    <property type="protein sequence ID" value="ACR40844.1"/>
    <property type="molecule type" value="Genomic_DNA"/>
</dbReference>
<dbReference type="RefSeq" id="WP_012710369.1">
    <property type="nucleotide sequence ID" value="NC_012726.1"/>
</dbReference>
<dbReference type="SMR" id="C4KKA3"/>
<dbReference type="GeneID" id="84060682"/>
<dbReference type="KEGG" id="sid:M164_0210"/>
<dbReference type="HOGENOM" id="CLU_036645_1_0_2"/>
<dbReference type="UniPathway" id="UPA00241"/>
<dbReference type="Proteomes" id="UP000001479">
    <property type="component" value="Chromosome"/>
</dbReference>
<dbReference type="GO" id="GO:0005737">
    <property type="term" value="C:cytoplasm"/>
    <property type="evidence" value="ECO:0007669"/>
    <property type="project" value="UniProtKB-SubCell"/>
</dbReference>
<dbReference type="GO" id="GO:0003864">
    <property type="term" value="F:3-methyl-2-oxobutanoate hydroxymethyltransferase activity"/>
    <property type="evidence" value="ECO:0007669"/>
    <property type="project" value="UniProtKB-UniRule"/>
</dbReference>
<dbReference type="GO" id="GO:0000287">
    <property type="term" value="F:magnesium ion binding"/>
    <property type="evidence" value="ECO:0007669"/>
    <property type="project" value="TreeGrafter"/>
</dbReference>
<dbReference type="GO" id="GO:0015937">
    <property type="term" value="P:coenzyme A biosynthetic process"/>
    <property type="evidence" value="ECO:0007669"/>
    <property type="project" value="UniProtKB-UniRule"/>
</dbReference>
<dbReference type="GO" id="GO:0015940">
    <property type="term" value="P:pantothenate biosynthetic process"/>
    <property type="evidence" value="ECO:0007669"/>
    <property type="project" value="InterPro"/>
</dbReference>
<dbReference type="CDD" id="cd06557">
    <property type="entry name" value="KPHMT-like"/>
    <property type="match status" value="1"/>
</dbReference>
<dbReference type="FunFam" id="3.20.20.60:FF:000052">
    <property type="entry name" value="3-methyl-2-oxobutanoate hydroxymethyltransferase"/>
    <property type="match status" value="1"/>
</dbReference>
<dbReference type="Gene3D" id="3.20.20.60">
    <property type="entry name" value="Phosphoenolpyruvate-binding domains"/>
    <property type="match status" value="1"/>
</dbReference>
<dbReference type="HAMAP" id="MF_00156">
    <property type="entry name" value="PanB"/>
    <property type="match status" value="1"/>
</dbReference>
<dbReference type="InterPro" id="IPR003700">
    <property type="entry name" value="Pantoate_hydroxy_MeTrfase"/>
</dbReference>
<dbReference type="InterPro" id="IPR015813">
    <property type="entry name" value="Pyrv/PenolPyrv_kinase-like_dom"/>
</dbReference>
<dbReference type="InterPro" id="IPR040442">
    <property type="entry name" value="Pyrv_kinase-like_dom_sf"/>
</dbReference>
<dbReference type="NCBIfam" id="TIGR00222">
    <property type="entry name" value="panB"/>
    <property type="match status" value="1"/>
</dbReference>
<dbReference type="NCBIfam" id="NF001452">
    <property type="entry name" value="PRK00311.1"/>
    <property type="match status" value="1"/>
</dbReference>
<dbReference type="PANTHER" id="PTHR20881">
    <property type="entry name" value="3-METHYL-2-OXOBUTANOATE HYDROXYMETHYLTRANSFERASE"/>
    <property type="match status" value="1"/>
</dbReference>
<dbReference type="PANTHER" id="PTHR20881:SF0">
    <property type="entry name" value="3-METHYL-2-OXOBUTANOATE HYDROXYMETHYLTRANSFERASE"/>
    <property type="match status" value="1"/>
</dbReference>
<dbReference type="Pfam" id="PF02548">
    <property type="entry name" value="Pantoate_transf"/>
    <property type="match status" value="1"/>
</dbReference>
<dbReference type="PIRSF" id="PIRSF000388">
    <property type="entry name" value="Pantoate_hydroxy_MeTrfase"/>
    <property type="match status" value="1"/>
</dbReference>
<dbReference type="SUPFAM" id="SSF51621">
    <property type="entry name" value="Phosphoenolpyruvate/pyruvate domain"/>
    <property type="match status" value="1"/>
</dbReference>
<name>PANB_SACI6</name>
<proteinExistence type="inferred from homology"/>
<keyword id="KW-0173">Coenzyme A biosynthesis</keyword>
<keyword id="KW-0963">Cytoplasm</keyword>
<keyword id="KW-0460">Magnesium</keyword>
<keyword id="KW-0479">Metal-binding</keyword>
<keyword id="KW-0808">Transferase</keyword>
<comment type="function">
    <text evidence="1">Catalyzes the reversible reaction in which hydroxymethyl group from 5,10-methylenetetrahydrofolate is transferred onto alpha-ketoisovalerate to form ketopantoate.</text>
</comment>
<comment type="catalytic activity">
    <reaction evidence="1">
        <text>3-methyl-2-oxobutanoate + (6R)-5,10-methylene-5,6,7,8-tetrahydrofolate + H2O = 2-dehydropantoate + (6S)-5,6,7,8-tetrahydrofolate</text>
        <dbReference type="Rhea" id="RHEA:11824"/>
        <dbReference type="ChEBI" id="CHEBI:11561"/>
        <dbReference type="ChEBI" id="CHEBI:11851"/>
        <dbReference type="ChEBI" id="CHEBI:15377"/>
        <dbReference type="ChEBI" id="CHEBI:15636"/>
        <dbReference type="ChEBI" id="CHEBI:57453"/>
        <dbReference type="EC" id="2.1.2.11"/>
    </reaction>
</comment>
<comment type="cofactor">
    <cofactor evidence="1">
        <name>Mg(2+)</name>
        <dbReference type="ChEBI" id="CHEBI:18420"/>
    </cofactor>
    <text evidence="1">Binds 1 Mg(2+) ion per subunit.</text>
</comment>
<comment type="pathway">
    <text evidence="1">Cofactor biosynthesis; coenzyme A biosynthesis.</text>
</comment>
<comment type="subunit">
    <text evidence="1">Homodecamer; pentamer of dimers.</text>
</comment>
<comment type="subcellular location">
    <subcellularLocation>
        <location evidence="1">Cytoplasm</location>
    </subcellularLocation>
</comment>
<comment type="similarity">
    <text evidence="1">Belongs to the PanB family.</text>
</comment>
<organism>
    <name type="scientific">Saccharolobus islandicus (strain M.16.4 / Kamchatka #3)</name>
    <name type="common">Sulfolobus islandicus</name>
    <dbReference type="NCBI Taxonomy" id="426118"/>
    <lineage>
        <taxon>Archaea</taxon>
        <taxon>Thermoproteota</taxon>
        <taxon>Thermoprotei</taxon>
        <taxon>Sulfolobales</taxon>
        <taxon>Sulfolobaceae</taxon>
        <taxon>Saccharolobus</taxon>
    </lineage>
</organism>
<feature type="chain" id="PRO_1000203478" description="3-methyl-2-oxobutanoate hydroxymethyltransferase">
    <location>
        <begin position="1"/>
        <end position="267"/>
    </location>
</feature>
<feature type="active site" description="Proton acceptor" evidence="1">
    <location>
        <position position="182"/>
    </location>
</feature>
<feature type="binding site" evidence="1">
    <location>
        <begin position="45"/>
        <end position="46"/>
    </location>
    <ligand>
        <name>3-methyl-2-oxobutanoate</name>
        <dbReference type="ChEBI" id="CHEBI:11851"/>
    </ligand>
</feature>
<feature type="binding site" evidence="1">
    <location>
        <position position="45"/>
    </location>
    <ligand>
        <name>Mg(2+)</name>
        <dbReference type="ChEBI" id="CHEBI:18420"/>
    </ligand>
</feature>
<feature type="binding site" evidence="1">
    <location>
        <position position="84"/>
    </location>
    <ligand>
        <name>3-methyl-2-oxobutanoate</name>
        <dbReference type="ChEBI" id="CHEBI:11851"/>
    </ligand>
</feature>
<feature type="binding site" evidence="1">
    <location>
        <position position="84"/>
    </location>
    <ligand>
        <name>Mg(2+)</name>
        <dbReference type="ChEBI" id="CHEBI:18420"/>
    </ligand>
</feature>
<feature type="binding site" evidence="1">
    <location>
        <position position="113"/>
    </location>
    <ligand>
        <name>3-methyl-2-oxobutanoate</name>
        <dbReference type="ChEBI" id="CHEBI:11851"/>
    </ligand>
</feature>
<feature type="binding site" evidence="1">
    <location>
        <position position="115"/>
    </location>
    <ligand>
        <name>Mg(2+)</name>
        <dbReference type="ChEBI" id="CHEBI:18420"/>
    </ligand>
</feature>
<gene>
    <name evidence="1" type="primary">panB</name>
    <name type="ordered locus">M164_0210</name>
</gene>
<protein>
    <recommendedName>
        <fullName evidence="1">3-methyl-2-oxobutanoate hydroxymethyltransferase</fullName>
        <ecNumber evidence="1">2.1.2.11</ecNumber>
    </recommendedName>
    <alternativeName>
        <fullName evidence="1">Ketopantoate hydroxymethyltransferase</fullName>
        <shortName evidence="1">KPHMT</shortName>
    </alternativeName>
</protein>